<feature type="chain" id="PRO_1000205867" description="Glycerol-3-phosphate dehydrogenase [NAD(P)+]">
    <location>
        <begin position="1"/>
        <end position="339"/>
    </location>
</feature>
<feature type="active site" description="Proton acceptor" evidence="1">
    <location>
        <position position="194"/>
    </location>
</feature>
<feature type="binding site" evidence="1">
    <location>
        <position position="13"/>
    </location>
    <ligand>
        <name>NADPH</name>
        <dbReference type="ChEBI" id="CHEBI:57783"/>
    </ligand>
</feature>
<feature type="binding site" evidence="1">
    <location>
        <position position="14"/>
    </location>
    <ligand>
        <name>NADPH</name>
        <dbReference type="ChEBI" id="CHEBI:57783"/>
    </ligand>
</feature>
<feature type="binding site" evidence="1">
    <location>
        <position position="108"/>
    </location>
    <ligand>
        <name>NADPH</name>
        <dbReference type="ChEBI" id="CHEBI:57783"/>
    </ligand>
</feature>
<feature type="binding site" evidence="1">
    <location>
        <position position="108"/>
    </location>
    <ligand>
        <name>sn-glycerol 3-phosphate</name>
        <dbReference type="ChEBI" id="CHEBI:57597"/>
    </ligand>
</feature>
<feature type="binding site" evidence="1">
    <location>
        <position position="139"/>
    </location>
    <ligand>
        <name>sn-glycerol 3-phosphate</name>
        <dbReference type="ChEBI" id="CHEBI:57597"/>
    </ligand>
</feature>
<feature type="binding site" evidence="1">
    <location>
        <position position="141"/>
    </location>
    <ligand>
        <name>sn-glycerol 3-phosphate</name>
        <dbReference type="ChEBI" id="CHEBI:57597"/>
    </ligand>
</feature>
<feature type="binding site" evidence="1">
    <location>
        <position position="143"/>
    </location>
    <ligand>
        <name>NADPH</name>
        <dbReference type="ChEBI" id="CHEBI:57783"/>
    </ligand>
</feature>
<feature type="binding site" evidence="1">
    <location>
        <position position="194"/>
    </location>
    <ligand>
        <name>sn-glycerol 3-phosphate</name>
        <dbReference type="ChEBI" id="CHEBI:57597"/>
    </ligand>
</feature>
<feature type="binding site" evidence="1">
    <location>
        <position position="247"/>
    </location>
    <ligand>
        <name>sn-glycerol 3-phosphate</name>
        <dbReference type="ChEBI" id="CHEBI:57597"/>
    </ligand>
</feature>
<feature type="binding site" evidence="1">
    <location>
        <position position="257"/>
    </location>
    <ligand>
        <name>sn-glycerol 3-phosphate</name>
        <dbReference type="ChEBI" id="CHEBI:57597"/>
    </ligand>
</feature>
<feature type="binding site" evidence="1">
    <location>
        <position position="258"/>
    </location>
    <ligand>
        <name>NADPH</name>
        <dbReference type="ChEBI" id="CHEBI:57783"/>
    </ligand>
</feature>
<feature type="binding site" evidence="1">
    <location>
        <position position="258"/>
    </location>
    <ligand>
        <name>sn-glycerol 3-phosphate</name>
        <dbReference type="ChEBI" id="CHEBI:57597"/>
    </ligand>
</feature>
<feature type="binding site" evidence="1">
    <location>
        <position position="259"/>
    </location>
    <ligand>
        <name>sn-glycerol 3-phosphate</name>
        <dbReference type="ChEBI" id="CHEBI:57597"/>
    </ligand>
</feature>
<feature type="binding site" evidence="1">
    <location>
        <position position="282"/>
    </location>
    <ligand>
        <name>NADPH</name>
        <dbReference type="ChEBI" id="CHEBI:57783"/>
    </ligand>
</feature>
<feature type="binding site" evidence="1">
    <location>
        <position position="284"/>
    </location>
    <ligand>
        <name>NADPH</name>
        <dbReference type="ChEBI" id="CHEBI:57783"/>
    </ligand>
</feature>
<reference key="1">
    <citation type="journal article" date="2009" name="PLoS Pathog.">
        <title>Genomic evidence for the evolution of Streptococcus equi: host restriction, increased virulence, and genetic exchange with human pathogens.</title>
        <authorList>
            <person name="Holden M.T.G."/>
            <person name="Heather Z."/>
            <person name="Paillot R."/>
            <person name="Steward K.F."/>
            <person name="Webb K."/>
            <person name="Ainslie F."/>
            <person name="Jourdan T."/>
            <person name="Bason N.C."/>
            <person name="Holroyd N.E."/>
            <person name="Mungall K."/>
            <person name="Quail M.A."/>
            <person name="Sanders M."/>
            <person name="Simmonds M."/>
            <person name="Willey D."/>
            <person name="Brooks K."/>
            <person name="Aanensen D.M."/>
            <person name="Spratt B.G."/>
            <person name="Jolley K.A."/>
            <person name="Maiden M.C.J."/>
            <person name="Kehoe M."/>
            <person name="Chanter N."/>
            <person name="Bentley S.D."/>
            <person name="Robinson C."/>
            <person name="Maskell D.J."/>
            <person name="Parkhill J."/>
            <person name="Waller A.S."/>
        </authorList>
    </citation>
    <scope>NUCLEOTIDE SEQUENCE [LARGE SCALE GENOMIC DNA]</scope>
    <source>
        <strain>H70</strain>
    </source>
</reference>
<name>GPDA_STRS7</name>
<accession>C0MFI2</accession>
<proteinExistence type="inferred from homology"/>
<evidence type="ECO:0000255" key="1">
    <source>
        <dbReference type="HAMAP-Rule" id="MF_00394"/>
    </source>
</evidence>
<sequence>MPKQKVAILGPGSWGTALAQVLNDNGHEVRLWGNIPEQINEINTRHTNSHYFKDIVLDEAIKATLDLKEALADADAILFVVPTKVTRLVAKQVAQVLDHKAVVMHASKGLEPETHERLSTILEEEIPAQLRSEIVVVSGPSHAEETIVRDITLITAASKDITAAKYVQALFSNHYFRLYTNTDVIGVETAGALKNIIAVGAGALHGLGYGDNAKAAVITRGLAEITRLGVKLGADPLTYSGLSGVGDLIVTGTSVHSRNWRAGAALGRGEKLKDIESNMGMVIEGISTTKVAYEIAQELGVYMPITSAIYKSIYEGADIKESILGMMSNEFRSENEWHS</sequence>
<dbReference type="EC" id="1.1.1.94" evidence="1"/>
<dbReference type="EMBL" id="FM204884">
    <property type="protein sequence ID" value="CAX00599.1"/>
    <property type="molecule type" value="Genomic_DNA"/>
</dbReference>
<dbReference type="SMR" id="C0MFI2"/>
<dbReference type="KEGG" id="seq:SZO_17500"/>
<dbReference type="PATRIC" id="fig|40041.11.peg.1880"/>
<dbReference type="eggNOG" id="COG0240">
    <property type="taxonomic scope" value="Bacteria"/>
</dbReference>
<dbReference type="HOGENOM" id="CLU_033449_0_2_9"/>
<dbReference type="UniPathway" id="UPA00940"/>
<dbReference type="Proteomes" id="UP000001368">
    <property type="component" value="Chromosome"/>
</dbReference>
<dbReference type="GO" id="GO:0005829">
    <property type="term" value="C:cytosol"/>
    <property type="evidence" value="ECO:0007669"/>
    <property type="project" value="TreeGrafter"/>
</dbReference>
<dbReference type="GO" id="GO:0047952">
    <property type="term" value="F:glycerol-3-phosphate dehydrogenase [NAD(P)+] activity"/>
    <property type="evidence" value="ECO:0007669"/>
    <property type="project" value="UniProtKB-UniRule"/>
</dbReference>
<dbReference type="GO" id="GO:0051287">
    <property type="term" value="F:NAD binding"/>
    <property type="evidence" value="ECO:0007669"/>
    <property type="project" value="InterPro"/>
</dbReference>
<dbReference type="GO" id="GO:0005975">
    <property type="term" value="P:carbohydrate metabolic process"/>
    <property type="evidence" value="ECO:0007669"/>
    <property type="project" value="InterPro"/>
</dbReference>
<dbReference type="GO" id="GO:0046167">
    <property type="term" value="P:glycerol-3-phosphate biosynthetic process"/>
    <property type="evidence" value="ECO:0007669"/>
    <property type="project" value="UniProtKB-UniRule"/>
</dbReference>
<dbReference type="GO" id="GO:0046168">
    <property type="term" value="P:glycerol-3-phosphate catabolic process"/>
    <property type="evidence" value="ECO:0007669"/>
    <property type="project" value="InterPro"/>
</dbReference>
<dbReference type="GO" id="GO:0006650">
    <property type="term" value="P:glycerophospholipid metabolic process"/>
    <property type="evidence" value="ECO:0007669"/>
    <property type="project" value="UniProtKB-UniRule"/>
</dbReference>
<dbReference type="GO" id="GO:0008654">
    <property type="term" value="P:phospholipid biosynthetic process"/>
    <property type="evidence" value="ECO:0007669"/>
    <property type="project" value="UniProtKB-KW"/>
</dbReference>
<dbReference type="FunFam" id="1.10.1040.10:FF:000001">
    <property type="entry name" value="Glycerol-3-phosphate dehydrogenase [NAD(P)+]"/>
    <property type="match status" value="1"/>
</dbReference>
<dbReference type="FunFam" id="3.40.50.720:FF:000019">
    <property type="entry name" value="Glycerol-3-phosphate dehydrogenase [NAD(P)+]"/>
    <property type="match status" value="1"/>
</dbReference>
<dbReference type="Gene3D" id="1.10.1040.10">
    <property type="entry name" value="N-(1-d-carboxylethyl)-l-norvaline Dehydrogenase, domain 2"/>
    <property type="match status" value="1"/>
</dbReference>
<dbReference type="Gene3D" id="3.40.50.720">
    <property type="entry name" value="NAD(P)-binding Rossmann-like Domain"/>
    <property type="match status" value="1"/>
</dbReference>
<dbReference type="HAMAP" id="MF_00394">
    <property type="entry name" value="NAD_Glyc3P_dehydrog"/>
    <property type="match status" value="1"/>
</dbReference>
<dbReference type="InterPro" id="IPR008927">
    <property type="entry name" value="6-PGluconate_DH-like_C_sf"/>
</dbReference>
<dbReference type="InterPro" id="IPR013328">
    <property type="entry name" value="6PGD_dom2"/>
</dbReference>
<dbReference type="InterPro" id="IPR006168">
    <property type="entry name" value="G3P_DH_NAD-dep"/>
</dbReference>
<dbReference type="InterPro" id="IPR006109">
    <property type="entry name" value="G3P_DH_NAD-dep_C"/>
</dbReference>
<dbReference type="InterPro" id="IPR011128">
    <property type="entry name" value="G3P_DH_NAD-dep_N"/>
</dbReference>
<dbReference type="InterPro" id="IPR036291">
    <property type="entry name" value="NAD(P)-bd_dom_sf"/>
</dbReference>
<dbReference type="NCBIfam" id="NF000940">
    <property type="entry name" value="PRK00094.1-2"/>
    <property type="match status" value="1"/>
</dbReference>
<dbReference type="NCBIfam" id="NF000941">
    <property type="entry name" value="PRK00094.1-3"/>
    <property type="match status" value="1"/>
</dbReference>
<dbReference type="NCBIfam" id="NF000942">
    <property type="entry name" value="PRK00094.1-4"/>
    <property type="match status" value="1"/>
</dbReference>
<dbReference type="PANTHER" id="PTHR11728">
    <property type="entry name" value="GLYCEROL-3-PHOSPHATE DEHYDROGENASE"/>
    <property type="match status" value="1"/>
</dbReference>
<dbReference type="PANTHER" id="PTHR11728:SF1">
    <property type="entry name" value="GLYCEROL-3-PHOSPHATE DEHYDROGENASE [NAD(+)] 2, CHLOROPLASTIC"/>
    <property type="match status" value="1"/>
</dbReference>
<dbReference type="Pfam" id="PF07479">
    <property type="entry name" value="NAD_Gly3P_dh_C"/>
    <property type="match status" value="1"/>
</dbReference>
<dbReference type="Pfam" id="PF01210">
    <property type="entry name" value="NAD_Gly3P_dh_N"/>
    <property type="match status" value="1"/>
</dbReference>
<dbReference type="PIRSF" id="PIRSF000114">
    <property type="entry name" value="Glycerol-3-P_dh"/>
    <property type="match status" value="1"/>
</dbReference>
<dbReference type="PRINTS" id="PR00077">
    <property type="entry name" value="GPDHDRGNASE"/>
</dbReference>
<dbReference type="SUPFAM" id="SSF48179">
    <property type="entry name" value="6-phosphogluconate dehydrogenase C-terminal domain-like"/>
    <property type="match status" value="1"/>
</dbReference>
<dbReference type="SUPFAM" id="SSF51735">
    <property type="entry name" value="NAD(P)-binding Rossmann-fold domains"/>
    <property type="match status" value="1"/>
</dbReference>
<dbReference type="PROSITE" id="PS00957">
    <property type="entry name" value="NAD_G3PDH"/>
    <property type="match status" value="1"/>
</dbReference>
<keyword id="KW-0963">Cytoplasm</keyword>
<keyword id="KW-0444">Lipid biosynthesis</keyword>
<keyword id="KW-0443">Lipid metabolism</keyword>
<keyword id="KW-0520">NAD</keyword>
<keyword id="KW-0521">NADP</keyword>
<keyword id="KW-0547">Nucleotide-binding</keyword>
<keyword id="KW-0560">Oxidoreductase</keyword>
<keyword id="KW-0594">Phospholipid biosynthesis</keyword>
<keyword id="KW-1208">Phospholipid metabolism</keyword>
<gene>
    <name evidence="1" type="primary">gpsA</name>
    <name type="ordered locus">SZO_17500</name>
</gene>
<protein>
    <recommendedName>
        <fullName evidence="1">Glycerol-3-phosphate dehydrogenase [NAD(P)+]</fullName>
        <ecNumber evidence="1">1.1.1.94</ecNumber>
    </recommendedName>
    <alternativeName>
        <fullName evidence="1">NAD(P)(+)-dependent glycerol-3-phosphate dehydrogenase</fullName>
    </alternativeName>
    <alternativeName>
        <fullName evidence="1">NAD(P)H-dependent dihydroxyacetone-phosphate reductase</fullName>
    </alternativeName>
</protein>
<comment type="function">
    <text evidence="1">Catalyzes the reduction of the glycolytic intermediate dihydroxyacetone phosphate (DHAP) to sn-glycerol 3-phosphate (G3P), the key precursor for phospholipid synthesis.</text>
</comment>
<comment type="catalytic activity">
    <reaction evidence="1">
        <text>sn-glycerol 3-phosphate + NAD(+) = dihydroxyacetone phosphate + NADH + H(+)</text>
        <dbReference type="Rhea" id="RHEA:11092"/>
        <dbReference type="ChEBI" id="CHEBI:15378"/>
        <dbReference type="ChEBI" id="CHEBI:57540"/>
        <dbReference type="ChEBI" id="CHEBI:57597"/>
        <dbReference type="ChEBI" id="CHEBI:57642"/>
        <dbReference type="ChEBI" id="CHEBI:57945"/>
        <dbReference type="EC" id="1.1.1.94"/>
    </reaction>
    <physiologicalReaction direction="right-to-left" evidence="1">
        <dbReference type="Rhea" id="RHEA:11094"/>
    </physiologicalReaction>
</comment>
<comment type="catalytic activity">
    <reaction evidence="1">
        <text>sn-glycerol 3-phosphate + NADP(+) = dihydroxyacetone phosphate + NADPH + H(+)</text>
        <dbReference type="Rhea" id="RHEA:11096"/>
        <dbReference type="ChEBI" id="CHEBI:15378"/>
        <dbReference type="ChEBI" id="CHEBI:57597"/>
        <dbReference type="ChEBI" id="CHEBI:57642"/>
        <dbReference type="ChEBI" id="CHEBI:57783"/>
        <dbReference type="ChEBI" id="CHEBI:58349"/>
        <dbReference type="EC" id="1.1.1.94"/>
    </reaction>
    <physiologicalReaction direction="right-to-left" evidence="1">
        <dbReference type="Rhea" id="RHEA:11098"/>
    </physiologicalReaction>
</comment>
<comment type="pathway">
    <text evidence="1">Membrane lipid metabolism; glycerophospholipid metabolism.</text>
</comment>
<comment type="subcellular location">
    <subcellularLocation>
        <location evidence="1">Cytoplasm</location>
    </subcellularLocation>
</comment>
<comment type="similarity">
    <text evidence="1">Belongs to the NAD-dependent glycerol-3-phosphate dehydrogenase family.</text>
</comment>
<organism>
    <name type="scientific">Streptococcus equi subsp. zooepidemicus (strain H70)</name>
    <dbReference type="NCBI Taxonomy" id="553483"/>
    <lineage>
        <taxon>Bacteria</taxon>
        <taxon>Bacillati</taxon>
        <taxon>Bacillota</taxon>
        <taxon>Bacilli</taxon>
        <taxon>Lactobacillales</taxon>
        <taxon>Streptococcaceae</taxon>
        <taxon>Streptococcus</taxon>
    </lineage>
</organism>